<gene>
    <name type="primary">HBA</name>
</gene>
<protein>
    <recommendedName>
        <fullName>Hemoglobin subunit alpha</fullName>
    </recommendedName>
    <alternativeName>
        <fullName>Alpha-globin</fullName>
    </alternativeName>
    <alternativeName>
        <fullName>Hemoglobin alpha chain</fullName>
    </alternativeName>
</protein>
<dbReference type="PIR" id="A02344">
    <property type="entry name" value="HAXM"/>
</dbReference>
<dbReference type="SMR" id="P02015"/>
<dbReference type="GO" id="GO:0072562">
    <property type="term" value="C:blood microparticle"/>
    <property type="evidence" value="ECO:0007669"/>
    <property type="project" value="TreeGrafter"/>
</dbReference>
<dbReference type="GO" id="GO:0031838">
    <property type="term" value="C:haptoglobin-hemoglobin complex"/>
    <property type="evidence" value="ECO:0007669"/>
    <property type="project" value="TreeGrafter"/>
</dbReference>
<dbReference type="GO" id="GO:0005833">
    <property type="term" value="C:hemoglobin complex"/>
    <property type="evidence" value="ECO:0007669"/>
    <property type="project" value="InterPro"/>
</dbReference>
<dbReference type="GO" id="GO:0031720">
    <property type="term" value="F:haptoglobin binding"/>
    <property type="evidence" value="ECO:0007669"/>
    <property type="project" value="TreeGrafter"/>
</dbReference>
<dbReference type="GO" id="GO:0020037">
    <property type="term" value="F:heme binding"/>
    <property type="evidence" value="ECO:0007669"/>
    <property type="project" value="InterPro"/>
</dbReference>
<dbReference type="GO" id="GO:0046872">
    <property type="term" value="F:metal ion binding"/>
    <property type="evidence" value="ECO:0007669"/>
    <property type="project" value="UniProtKB-KW"/>
</dbReference>
<dbReference type="GO" id="GO:0043177">
    <property type="term" value="F:organic acid binding"/>
    <property type="evidence" value="ECO:0007669"/>
    <property type="project" value="TreeGrafter"/>
</dbReference>
<dbReference type="GO" id="GO:0019825">
    <property type="term" value="F:oxygen binding"/>
    <property type="evidence" value="ECO:0007669"/>
    <property type="project" value="InterPro"/>
</dbReference>
<dbReference type="GO" id="GO:0005344">
    <property type="term" value="F:oxygen carrier activity"/>
    <property type="evidence" value="ECO:0007669"/>
    <property type="project" value="UniProtKB-KW"/>
</dbReference>
<dbReference type="GO" id="GO:0004601">
    <property type="term" value="F:peroxidase activity"/>
    <property type="evidence" value="ECO:0007669"/>
    <property type="project" value="TreeGrafter"/>
</dbReference>
<dbReference type="GO" id="GO:0042744">
    <property type="term" value="P:hydrogen peroxide catabolic process"/>
    <property type="evidence" value="ECO:0007669"/>
    <property type="project" value="TreeGrafter"/>
</dbReference>
<dbReference type="FunFam" id="1.10.490.10:FF:000002">
    <property type="entry name" value="Hemoglobin subunit alpha"/>
    <property type="match status" value="1"/>
</dbReference>
<dbReference type="Gene3D" id="1.10.490.10">
    <property type="entry name" value="Globins"/>
    <property type="match status" value="1"/>
</dbReference>
<dbReference type="InterPro" id="IPR000971">
    <property type="entry name" value="Globin"/>
</dbReference>
<dbReference type="InterPro" id="IPR009050">
    <property type="entry name" value="Globin-like_sf"/>
</dbReference>
<dbReference type="InterPro" id="IPR012292">
    <property type="entry name" value="Globin/Proto"/>
</dbReference>
<dbReference type="InterPro" id="IPR002338">
    <property type="entry name" value="Hemoglobin_a-typ"/>
</dbReference>
<dbReference type="InterPro" id="IPR050056">
    <property type="entry name" value="Hemoglobin_oxygen_transport"/>
</dbReference>
<dbReference type="PANTHER" id="PTHR11442">
    <property type="entry name" value="HEMOGLOBIN FAMILY MEMBER"/>
    <property type="match status" value="1"/>
</dbReference>
<dbReference type="PANTHER" id="PTHR11442:SF48">
    <property type="entry name" value="HEMOGLOBIN SUBUNIT ALPHA"/>
    <property type="match status" value="1"/>
</dbReference>
<dbReference type="Pfam" id="PF00042">
    <property type="entry name" value="Globin"/>
    <property type="match status" value="1"/>
</dbReference>
<dbReference type="PRINTS" id="PR00612">
    <property type="entry name" value="ALPHAHAEM"/>
</dbReference>
<dbReference type="SUPFAM" id="SSF46458">
    <property type="entry name" value="Globin-like"/>
    <property type="match status" value="1"/>
</dbReference>
<dbReference type="PROSITE" id="PS01033">
    <property type="entry name" value="GLOBIN"/>
    <property type="match status" value="1"/>
</dbReference>
<name>HBA_AMBME</name>
<proteinExistence type="evidence at protein level"/>
<reference key="1">
    <citation type="journal article" date="1980" name="Eur. J. Biochem.">
        <title>Hemoglobins of an amphibia, the neotenous Ambystoma mexicanum. Complete amino-acid sequence of the alpha chain of the major component using automatic solid-phase Edman degradation.</title>
        <authorList>
            <person name="Boissel J.-P."/>
            <person name="Wajcman H."/>
            <person name="Labie D."/>
        </authorList>
    </citation>
    <scope>PROTEIN SEQUENCE OF 2-143</scope>
</reference>
<comment type="function">
    <text>Involved in oxygen transport from the lung to the various peripheral tissues.</text>
</comment>
<comment type="subunit">
    <text>Heterotetramer of two alpha chains and two beta chains.</text>
</comment>
<comment type="tissue specificity">
    <text>Red blood cells.</text>
</comment>
<comment type="similarity">
    <text evidence="2">Belongs to the globin family.</text>
</comment>
<feature type="initiator methionine" description="Removed" evidence="1">
    <location>
        <position position="1"/>
    </location>
</feature>
<feature type="chain" id="PRO_0000052543" description="Hemoglobin subunit alpha">
    <location>
        <begin position="2"/>
        <end position="143"/>
    </location>
</feature>
<feature type="domain" description="Globin" evidence="2">
    <location>
        <begin position="3"/>
        <end position="143"/>
    </location>
</feature>
<feature type="binding site" evidence="2">
    <location>
        <position position="60"/>
    </location>
    <ligand>
        <name>O2</name>
        <dbReference type="ChEBI" id="CHEBI:15379"/>
    </ligand>
</feature>
<feature type="binding site" description="proximal binding residue" evidence="2">
    <location>
        <position position="89"/>
    </location>
    <ligand>
        <name>heme b</name>
        <dbReference type="ChEBI" id="CHEBI:60344"/>
    </ligand>
    <ligandPart>
        <name>Fe</name>
        <dbReference type="ChEBI" id="CHEBI:18248"/>
    </ligandPart>
</feature>
<evidence type="ECO:0000250" key="1"/>
<evidence type="ECO:0000255" key="2">
    <source>
        <dbReference type="PROSITE-ProRule" id="PRU00238"/>
    </source>
</evidence>
<organism>
    <name type="scientific">Ambystoma mexicanum</name>
    <name type="common">Axolotl</name>
    <dbReference type="NCBI Taxonomy" id="8296"/>
    <lineage>
        <taxon>Eukaryota</taxon>
        <taxon>Metazoa</taxon>
        <taxon>Chordata</taxon>
        <taxon>Craniata</taxon>
        <taxon>Vertebrata</taxon>
        <taxon>Euteleostomi</taxon>
        <taxon>Amphibia</taxon>
        <taxon>Batrachia</taxon>
        <taxon>Caudata</taxon>
        <taxon>Salamandroidea</taxon>
        <taxon>Ambystomatidae</taxon>
        <taxon>Ambystoma</taxon>
    </lineage>
</organism>
<sequence length="143" mass="16031">MFKLSGEDKANVKAVWDHVKGHEDAFGHEALGRMFTGIEQTHTYFPDKDLNEGSFALHSHGKKVMGALSNAVAHIDDLEATLVKLSDKHAHDLMVDPAEFPRLAEDILVVLGFHLPAKFTYAVQCSIDKFLHVTMRLCISKYR</sequence>
<keyword id="KW-0903">Direct protein sequencing</keyword>
<keyword id="KW-0349">Heme</keyword>
<keyword id="KW-0408">Iron</keyword>
<keyword id="KW-0479">Metal-binding</keyword>
<keyword id="KW-0561">Oxygen transport</keyword>
<keyword id="KW-0813">Transport</keyword>
<accession>P02015</accession>